<evidence type="ECO:0000255" key="1"/>
<evidence type="ECO:0000269" key="2">
    <source>
    </source>
</evidence>
<evidence type="ECO:0000303" key="3">
    <source>
    </source>
</evidence>
<evidence type="ECO:0000305" key="4"/>
<accession>A0A097ZPD8</accession>
<name>ANDB_EMEVA</name>
<sequence>MQPITQIPLTFDTVVNLLGSASGIGWILNYILMTYYSFRDKTYSMSMLPLCCNIAWEFVYGILCPSSTFVVRPVILSWLVLNCLVVYAAIKYSPNEWAHAPLVQRHLPLLFTVGIAACTGFHIALIRKFDPATAFLWSARSCQVLLSIGGLFQLLCRSSTKGGSYVLWLSRFLGSICGVLKMTLMWKYGESRFPWLDDPLTAYCIALWIISDVLYGVVFYSLRSKELAGAGKAKAI</sequence>
<proteinExistence type="evidence at protein level"/>
<dbReference type="EC" id="4.2.3.-" evidence="2"/>
<dbReference type="EMBL" id="AB981314">
    <property type="protein sequence ID" value="BAP81856.1"/>
    <property type="molecule type" value="Genomic_DNA"/>
</dbReference>
<dbReference type="SMR" id="A0A097ZPD8"/>
<dbReference type="BioCyc" id="MetaCyc:MONOMER-19045"/>
<dbReference type="UniPathway" id="UPA00213"/>
<dbReference type="GO" id="GO:0016020">
    <property type="term" value="C:membrane"/>
    <property type="evidence" value="ECO:0007669"/>
    <property type="project" value="UniProtKB-SubCell"/>
</dbReference>
<dbReference type="GO" id="GO:0016829">
    <property type="term" value="F:lyase activity"/>
    <property type="evidence" value="ECO:0007669"/>
    <property type="project" value="UniProtKB-KW"/>
</dbReference>
<dbReference type="GO" id="GO:0016114">
    <property type="term" value="P:terpenoid biosynthetic process"/>
    <property type="evidence" value="ECO:0007669"/>
    <property type="project" value="UniProtKB-UniPathway"/>
</dbReference>
<dbReference type="InterPro" id="IPR039020">
    <property type="entry name" value="PaxB-like"/>
</dbReference>
<dbReference type="PANTHER" id="PTHR42038">
    <property type="match status" value="1"/>
</dbReference>
<dbReference type="PANTHER" id="PTHR42038:SF2">
    <property type="entry name" value="TERPENE CYCLASE AUSL"/>
    <property type="match status" value="1"/>
</dbReference>
<dbReference type="Pfam" id="PF25129">
    <property type="entry name" value="Pyr4-TMTC"/>
    <property type="match status" value="1"/>
</dbReference>
<reference key="1">
    <citation type="journal article" date="2014" name="J. Am. Chem. Soc.">
        <title>Complete biosynthetic pathway of anditomin: nature's sophisticated synthetic route to a complex fungal meroterpenoid.</title>
        <authorList>
            <person name="Matsuda Y."/>
            <person name="Wakimoto T."/>
            <person name="Mori T."/>
            <person name="Awakawa T."/>
            <person name="Abe I."/>
        </authorList>
    </citation>
    <scope>NUCLEOTIDE SEQUENCE [GENOMIC DNA]</scope>
    <scope>FUNCTION</scope>
    <scope>CATALYTIC ACTIVITY</scope>
    <source>
        <strain>ATCC 12069 / CBS 136.55 / IMI 60316 / NBRC 32302</strain>
    </source>
</reference>
<comment type="function">
    <text evidence="2">Terpene cyclase; part of the gene cluster that mediates the biosynthesis of anditomin, a fungal meroterpenoid (PubMed:25216349). The first step of the pathway is the synthesis of 3,5-dimethylorsellinic acid (DMOA) by the polyketide synthase andM (PubMed:25216349). DMOA is then converted to the phthalide compound 5,7-dihydroxy-4,6-dimethylphthalide (DHDMP) by the cytochrome P450 monooxygenase andK, which is further prenylated by the prenyltransferase andD to yield farnesyl-DHDMP (PubMed:25216349). Further epoxidation by the FAD-dependent monooxygenase andE leads to epoxyfarnesyl-DHDMP (PubMed:25216349). The next step involves the terpene cyclase andB that converts epoxyfarnesyl-DHDMP into preandiloid A through opening of the epoxide ring followed by the cyclization of the farnesyl moiety (PubMed:25216349). Preandiloid A is in turn oxidized at the C-3 hydroxyl group to yield preandiloid B by the dehydrogenase andC (PubMed:25216349). The dioxygenase andA is solely responsible for the dehydrogenation of preandiloid B leading to the enone preandiloid C, as well as for the intriguing structural rearrangement to generate the bicyclo[2.2.2]octane core, transforming preandiloid C into andiconin (PubMed:25216349). FAD-binding monooxygenase andJ then produces andilesin D which is reduced by dehydrogenase andI to yield andilesin A (PubMed:25216349). Action of acetyltransferase andG followed by a spontaneous acetate elimination leads then to andilesin B, which is in turn substrate of the short chain dehydrogenase andH to yield andilesin C (PubMed:25216349). Finally, the dioxygenase andF catalyzes the transformation of andilesin C to anditomin (PubMed:25216349).</text>
</comment>
<comment type="pathway">
    <text evidence="2">Secondary metabolite biosynthesis; terpenoid biosynthesis.</text>
</comment>
<comment type="subcellular location">
    <subcellularLocation>
        <location evidence="1">Membrane</location>
        <topology evidence="1">Multi-pass membrane protein</topology>
    </subcellularLocation>
</comment>
<comment type="similarity">
    <text evidence="4">Belongs to the paxB family.</text>
</comment>
<gene>
    <name evidence="3" type="primary">andB</name>
</gene>
<organism>
    <name type="scientific">Emericella variicolor</name>
    <name type="common">Aspergillus stellatus</name>
    <dbReference type="NCBI Taxonomy" id="1549217"/>
    <lineage>
        <taxon>Eukaryota</taxon>
        <taxon>Fungi</taxon>
        <taxon>Dikarya</taxon>
        <taxon>Ascomycota</taxon>
        <taxon>Pezizomycotina</taxon>
        <taxon>Eurotiomycetes</taxon>
        <taxon>Eurotiomycetidae</taxon>
        <taxon>Eurotiales</taxon>
        <taxon>Aspergillaceae</taxon>
        <taxon>Aspergillus</taxon>
        <taxon>Aspergillus subgen. Nidulantes</taxon>
    </lineage>
</organism>
<protein>
    <recommendedName>
        <fullName evidence="3">Terpene cyclase andB</fullName>
        <ecNumber evidence="2">4.2.3.-</ecNumber>
    </recommendedName>
    <alternativeName>
        <fullName evidence="3">Anditomin synthesis protein B</fullName>
    </alternativeName>
</protein>
<keyword id="KW-0456">Lyase</keyword>
<keyword id="KW-0472">Membrane</keyword>
<keyword id="KW-0812">Transmembrane</keyword>
<keyword id="KW-1133">Transmembrane helix</keyword>
<feature type="chain" id="PRO_0000436578" description="Terpene cyclase andB">
    <location>
        <begin position="1"/>
        <end position="236"/>
    </location>
</feature>
<feature type="transmembrane region" description="Helical" evidence="1">
    <location>
        <begin position="13"/>
        <end position="33"/>
    </location>
</feature>
<feature type="transmembrane region" description="Helical" evidence="1">
    <location>
        <begin position="45"/>
        <end position="65"/>
    </location>
</feature>
<feature type="transmembrane region" description="Helical" evidence="1">
    <location>
        <begin position="70"/>
        <end position="90"/>
    </location>
</feature>
<feature type="transmembrane region" description="Helical" evidence="1">
    <location>
        <begin position="106"/>
        <end position="126"/>
    </location>
</feature>
<feature type="transmembrane region" description="Helical" evidence="1">
    <location>
        <begin position="135"/>
        <end position="155"/>
    </location>
</feature>
<feature type="transmembrane region" description="Helical" evidence="1">
    <location>
        <begin position="166"/>
        <end position="186"/>
    </location>
</feature>
<feature type="transmembrane region" description="Helical" evidence="1">
    <location>
        <begin position="200"/>
        <end position="220"/>
    </location>
</feature>